<proteinExistence type="evidence at transcript level"/>
<feature type="signal peptide" evidence="2">
    <location>
        <begin position="1"/>
        <end position="22"/>
    </location>
</feature>
<feature type="peptide" id="PRO_0000022438" description="Styelin-E">
    <location>
        <begin position="23"/>
        <end position="54"/>
    </location>
</feature>
<feature type="propeptide" id="PRO_0000022439" description="Removed in mature form" evidence="2">
    <location>
        <begin position="56"/>
        <end position="81"/>
    </location>
</feature>
<feature type="modified residue" description="6'-bromotryptophan" evidence="1">
    <location>
        <position position="24"/>
    </location>
</feature>
<feature type="modified residue" description="3,4-dihydroxyarginine" evidence="1">
    <location>
        <position position="26"/>
    </location>
</feature>
<feature type="modified residue" description="4,5-dihydroxylysine" evidence="1">
    <location>
        <position position="27"/>
    </location>
</feature>
<feature type="modified residue" description="4,5-dihydroxylysine" evidence="1">
    <location>
        <position position="30"/>
    </location>
</feature>
<feature type="modified residue" description="4,5-dihydroxylysine" evidence="1">
    <location>
        <position position="34"/>
    </location>
</feature>
<feature type="modified residue" description="3',4'-dihydroxyphenylalanine" evidence="1">
    <location>
        <position position="36"/>
    </location>
</feature>
<feature type="modified residue" description="3',4'-dihydroxyphenylalanine" evidence="1">
    <location>
        <position position="37"/>
    </location>
</feature>
<feature type="modified residue" description="4,5-dihydroxylysine" evidence="1">
    <location>
        <position position="38"/>
    </location>
</feature>
<feature type="modified residue" description="5-hydroxylysine" evidence="1">
    <location>
        <position position="40"/>
    </location>
</feature>
<feature type="modified residue" description="3',4'-dihydroxyphenylalanine" evidence="1">
    <location>
        <position position="41"/>
    </location>
</feature>
<feature type="modified residue" description="3',4'-dihydroxyphenylalanine" evidence="1">
    <location>
        <position position="42"/>
    </location>
</feature>
<feature type="modified residue" description="5-hydroxylysine" evidence="1">
    <location>
        <position position="44"/>
    </location>
</feature>
<feature type="modified residue" description="Leucine amide" evidence="1">
    <location>
        <position position="54"/>
    </location>
</feature>
<organism>
    <name type="scientific">Styela clava</name>
    <name type="common">Sea squirt</name>
    <dbReference type="NCBI Taxonomy" id="7725"/>
    <lineage>
        <taxon>Eukaryota</taxon>
        <taxon>Metazoa</taxon>
        <taxon>Chordata</taxon>
        <taxon>Tunicata</taxon>
        <taxon>Ascidiacea</taxon>
        <taxon>Stolidobranchia</taxon>
        <taxon>Styelidae</taxon>
        <taxon>Styela</taxon>
    </lineage>
</organism>
<protein>
    <recommendedName>
        <fullName>Styelin-E</fullName>
    </recommendedName>
</protein>
<keyword id="KW-0027">Amidation</keyword>
<keyword id="KW-0044">Antibiotic</keyword>
<keyword id="KW-0929">Antimicrobial</keyword>
<keyword id="KW-0102">Bromination</keyword>
<keyword id="KW-0379">Hydroxylation</keyword>
<keyword id="KW-0964">Secreted</keyword>
<keyword id="KW-0732">Signal</keyword>
<sequence>MQMKATILIVLVALFMIQQSEAGWLRKAAKSVGKFYYKHKYYIKAAWKIGRHALGDMTDEEFQDFMKEVEQAREEELQSRQ</sequence>
<dbReference type="EMBL" id="Y13270">
    <property type="protein sequence ID" value="CAA73719.1"/>
    <property type="molecule type" value="mRNA"/>
</dbReference>
<dbReference type="GO" id="GO:0005576">
    <property type="term" value="C:extracellular region"/>
    <property type="evidence" value="ECO:0007669"/>
    <property type="project" value="UniProtKB-SubCell"/>
</dbReference>
<dbReference type="GO" id="GO:0042742">
    <property type="term" value="P:defense response to bacterium"/>
    <property type="evidence" value="ECO:0007669"/>
    <property type="project" value="UniProtKB-KW"/>
</dbReference>
<dbReference type="InterPro" id="IPR035578">
    <property type="entry name" value="Styelin"/>
</dbReference>
<dbReference type="Pfam" id="PF17562">
    <property type="entry name" value="Styelin"/>
    <property type="match status" value="1"/>
</dbReference>
<name>STYE_STYCL</name>
<comment type="function">
    <text evidence="1">Bactericidal against several Gram-positive and Gram-negative bacteria.</text>
</comment>
<comment type="subcellular location">
    <subcellularLocation>
        <location>Secreted</location>
    </subcellularLocation>
</comment>
<comment type="tissue specificity">
    <text>Hemocytes and pharyngeal tissues.</text>
</comment>
<comment type="PTM">
    <text>Contains L-DOPA (3',4'-dihydroxyphenylalanine).</text>
</comment>
<reference key="1">
    <citation type="journal article" date="1997" name="FEBS Lett.">
        <title>cDNA cloning of three cecropin-like antimicrobial peptides (Styelins) from the tunicate, Styela clava.</title>
        <authorList>
            <person name="Zhao C."/>
            <person name="Liaw L."/>
            <person name="Lee I.H."/>
            <person name="Lehrer R.I."/>
        </authorList>
    </citation>
    <scope>NUCLEOTIDE SEQUENCE [MRNA]</scope>
    <source>
        <tissue>Pharynx</tissue>
    </source>
</reference>
<evidence type="ECO:0000250" key="1"/>
<evidence type="ECO:0000255" key="2"/>
<accession>O18496</accession>